<reference key="1">
    <citation type="submission" date="2008-02" db="EMBL/GenBank/DDBJ databases">
        <title>Complete sequence of Pseudomonas putida W619.</title>
        <authorList>
            <person name="Copeland A."/>
            <person name="Lucas S."/>
            <person name="Lapidus A."/>
            <person name="Barry K."/>
            <person name="Detter J.C."/>
            <person name="Glavina del Rio T."/>
            <person name="Dalin E."/>
            <person name="Tice H."/>
            <person name="Pitluck S."/>
            <person name="Chain P."/>
            <person name="Malfatti S."/>
            <person name="Shin M."/>
            <person name="Vergez L."/>
            <person name="Schmutz J."/>
            <person name="Larimer F."/>
            <person name="Land M."/>
            <person name="Hauser L."/>
            <person name="Kyrpides N."/>
            <person name="Kim E."/>
            <person name="Taghavi S."/>
            <person name="Vangronsveld D."/>
            <person name="van der Lelie D."/>
            <person name="Richardson P."/>
        </authorList>
    </citation>
    <scope>NUCLEOTIDE SEQUENCE [LARGE SCALE GENOMIC DNA]</scope>
    <source>
        <strain>W619</strain>
    </source>
</reference>
<feature type="chain" id="PRO_1000096367" description="Phosphoglycerate kinase">
    <location>
        <begin position="1"/>
        <end position="387"/>
    </location>
</feature>
<feature type="binding site" evidence="1">
    <location>
        <begin position="21"/>
        <end position="23"/>
    </location>
    <ligand>
        <name>substrate</name>
    </ligand>
</feature>
<feature type="binding site" evidence="1">
    <location>
        <position position="36"/>
    </location>
    <ligand>
        <name>substrate</name>
    </ligand>
</feature>
<feature type="binding site" evidence="1">
    <location>
        <begin position="59"/>
        <end position="62"/>
    </location>
    <ligand>
        <name>substrate</name>
    </ligand>
</feature>
<feature type="binding site" evidence="1">
    <location>
        <position position="113"/>
    </location>
    <ligand>
        <name>substrate</name>
    </ligand>
</feature>
<feature type="binding site" evidence="1">
    <location>
        <position position="146"/>
    </location>
    <ligand>
        <name>substrate</name>
    </ligand>
</feature>
<feature type="binding site" evidence="1">
    <location>
        <position position="197"/>
    </location>
    <ligand>
        <name>ATP</name>
        <dbReference type="ChEBI" id="CHEBI:30616"/>
    </ligand>
</feature>
<feature type="binding site" evidence="1">
    <location>
        <position position="314"/>
    </location>
    <ligand>
        <name>ATP</name>
        <dbReference type="ChEBI" id="CHEBI:30616"/>
    </ligand>
</feature>
<feature type="binding site" evidence="1">
    <location>
        <begin position="340"/>
        <end position="343"/>
    </location>
    <ligand>
        <name>ATP</name>
        <dbReference type="ChEBI" id="CHEBI:30616"/>
    </ligand>
</feature>
<proteinExistence type="inferred from homology"/>
<dbReference type="EC" id="2.7.2.3" evidence="1"/>
<dbReference type="EMBL" id="CP000949">
    <property type="protein sequence ID" value="ACA71008.1"/>
    <property type="molecule type" value="Genomic_DNA"/>
</dbReference>
<dbReference type="SMR" id="B1J302"/>
<dbReference type="STRING" id="390235.PputW619_0503"/>
<dbReference type="KEGG" id="ppw:PputW619_0503"/>
<dbReference type="eggNOG" id="COG0126">
    <property type="taxonomic scope" value="Bacteria"/>
</dbReference>
<dbReference type="HOGENOM" id="CLU_025427_0_2_6"/>
<dbReference type="OrthoDB" id="9808460at2"/>
<dbReference type="UniPathway" id="UPA00109">
    <property type="reaction ID" value="UER00185"/>
</dbReference>
<dbReference type="GO" id="GO:0005829">
    <property type="term" value="C:cytosol"/>
    <property type="evidence" value="ECO:0007669"/>
    <property type="project" value="TreeGrafter"/>
</dbReference>
<dbReference type="GO" id="GO:0043531">
    <property type="term" value="F:ADP binding"/>
    <property type="evidence" value="ECO:0007669"/>
    <property type="project" value="TreeGrafter"/>
</dbReference>
<dbReference type="GO" id="GO:0005524">
    <property type="term" value="F:ATP binding"/>
    <property type="evidence" value="ECO:0007669"/>
    <property type="project" value="UniProtKB-KW"/>
</dbReference>
<dbReference type="GO" id="GO:0004618">
    <property type="term" value="F:phosphoglycerate kinase activity"/>
    <property type="evidence" value="ECO:0007669"/>
    <property type="project" value="UniProtKB-UniRule"/>
</dbReference>
<dbReference type="GO" id="GO:0006094">
    <property type="term" value="P:gluconeogenesis"/>
    <property type="evidence" value="ECO:0007669"/>
    <property type="project" value="TreeGrafter"/>
</dbReference>
<dbReference type="GO" id="GO:0006096">
    <property type="term" value="P:glycolytic process"/>
    <property type="evidence" value="ECO:0007669"/>
    <property type="project" value="UniProtKB-UniRule"/>
</dbReference>
<dbReference type="FunFam" id="3.40.50.1260:FF:000001">
    <property type="entry name" value="Phosphoglycerate kinase"/>
    <property type="match status" value="1"/>
</dbReference>
<dbReference type="FunFam" id="3.40.50.1260:FF:000002">
    <property type="entry name" value="Phosphoglycerate kinase"/>
    <property type="match status" value="1"/>
</dbReference>
<dbReference type="Gene3D" id="3.40.50.1260">
    <property type="entry name" value="Phosphoglycerate kinase, N-terminal domain"/>
    <property type="match status" value="2"/>
</dbReference>
<dbReference type="HAMAP" id="MF_00145">
    <property type="entry name" value="Phosphoglyc_kinase"/>
    <property type="match status" value="1"/>
</dbReference>
<dbReference type="InterPro" id="IPR001576">
    <property type="entry name" value="Phosphoglycerate_kinase"/>
</dbReference>
<dbReference type="InterPro" id="IPR015911">
    <property type="entry name" value="Phosphoglycerate_kinase_CS"/>
</dbReference>
<dbReference type="InterPro" id="IPR015824">
    <property type="entry name" value="Phosphoglycerate_kinase_N"/>
</dbReference>
<dbReference type="InterPro" id="IPR036043">
    <property type="entry name" value="Phosphoglycerate_kinase_sf"/>
</dbReference>
<dbReference type="PANTHER" id="PTHR11406">
    <property type="entry name" value="PHOSPHOGLYCERATE KINASE"/>
    <property type="match status" value="1"/>
</dbReference>
<dbReference type="PANTHER" id="PTHR11406:SF23">
    <property type="entry name" value="PHOSPHOGLYCERATE KINASE 1, CHLOROPLASTIC-RELATED"/>
    <property type="match status" value="1"/>
</dbReference>
<dbReference type="Pfam" id="PF00162">
    <property type="entry name" value="PGK"/>
    <property type="match status" value="1"/>
</dbReference>
<dbReference type="PIRSF" id="PIRSF000724">
    <property type="entry name" value="Pgk"/>
    <property type="match status" value="1"/>
</dbReference>
<dbReference type="PRINTS" id="PR00477">
    <property type="entry name" value="PHGLYCKINASE"/>
</dbReference>
<dbReference type="SUPFAM" id="SSF53748">
    <property type="entry name" value="Phosphoglycerate kinase"/>
    <property type="match status" value="1"/>
</dbReference>
<dbReference type="PROSITE" id="PS00111">
    <property type="entry name" value="PGLYCERATE_KINASE"/>
    <property type="match status" value="1"/>
</dbReference>
<sequence>MTVLKMTDLDLQGKRVLIREDLNVPVKDGVVTSDARILAALPTIKLALEKGAAVMVCSHLGRPTEGEFSAENSLKPVADYLSKALGRDVALVADYLDGIEVKAGDLVLFENVRFNKGEKKNADELAQKYAALCDVFVMDAFGTAHRAEGSTHGVAKFAKVAAAGPLLAAELDALGKALKAPAKPMAAIVAGSKVSTKLDVLNSLSSVCDQLIVGGGIANTFLAAAGHPVGKSLYEPDLVETAKAIAAKVSVPLPVDVVVAKEFAESAEATVKAIADVAADDMILDIGPQTAANFAELLKSSKTILWNGPVGVFEFDQFGNGTKVLAKAIADSAAFSIAGGGDTLAAIDKYGVSAEISYISTGGGAFLEFVEGKVLPAVAILEERAKA</sequence>
<keyword id="KW-0067">ATP-binding</keyword>
<keyword id="KW-0963">Cytoplasm</keyword>
<keyword id="KW-0324">Glycolysis</keyword>
<keyword id="KW-0418">Kinase</keyword>
<keyword id="KW-0547">Nucleotide-binding</keyword>
<keyword id="KW-0808">Transferase</keyword>
<comment type="catalytic activity">
    <reaction evidence="1">
        <text>(2R)-3-phosphoglycerate + ATP = (2R)-3-phospho-glyceroyl phosphate + ADP</text>
        <dbReference type="Rhea" id="RHEA:14801"/>
        <dbReference type="ChEBI" id="CHEBI:30616"/>
        <dbReference type="ChEBI" id="CHEBI:57604"/>
        <dbReference type="ChEBI" id="CHEBI:58272"/>
        <dbReference type="ChEBI" id="CHEBI:456216"/>
        <dbReference type="EC" id="2.7.2.3"/>
    </reaction>
</comment>
<comment type="pathway">
    <text evidence="1">Carbohydrate degradation; glycolysis; pyruvate from D-glyceraldehyde 3-phosphate: step 2/5.</text>
</comment>
<comment type="subunit">
    <text evidence="1">Monomer.</text>
</comment>
<comment type="subcellular location">
    <subcellularLocation>
        <location evidence="1">Cytoplasm</location>
    </subcellularLocation>
</comment>
<comment type="similarity">
    <text evidence="1">Belongs to the phosphoglycerate kinase family.</text>
</comment>
<name>PGK_PSEPW</name>
<accession>B1J302</accession>
<organism>
    <name type="scientific">Pseudomonas putida (strain W619)</name>
    <dbReference type="NCBI Taxonomy" id="390235"/>
    <lineage>
        <taxon>Bacteria</taxon>
        <taxon>Pseudomonadati</taxon>
        <taxon>Pseudomonadota</taxon>
        <taxon>Gammaproteobacteria</taxon>
        <taxon>Pseudomonadales</taxon>
        <taxon>Pseudomonadaceae</taxon>
        <taxon>Pseudomonas</taxon>
    </lineage>
</organism>
<protein>
    <recommendedName>
        <fullName evidence="1">Phosphoglycerate kinase</fullName>
        <ecNumber evidence="1">2.7.2.3</ecNumber>
    </recommendedName>
</protein>
<gene>
    <name evidence="1" type="primary">pgk</name>
    <name type="ordered locus">PputW619_0503</name>
</gene>
<evidence type="ECO:0000255" key="1">
    <source>
        <dbReference type="HAMAP-Rule" id="MF_00145"/>
    </source>
</evidence>